<feature type="chain" id="PRO_0000231710" description="Imidazole glycerol phosphate synthase subunit HisH">
    <location>
        <begin position="1"/>
        <end position="213"/>
    </location>
</feature>
<feature type="domain" description="Glutamine amidotransferase type-1" evidence="1">
    <location>
        <begin position="4"/>
        <end position="213"/>
    </location>
</feature>
<feature type="active site" description="Nucleophile" evidence="1">
    <location>
        <position position="83"/>
    </location>
</feature>
<feature type="active site" evidence="1">
    <location>
        <position position="193"/>
    </location>
</feature>
<feature type="active site" evidence="1">
    <location>
        <position position="195"/>
    </location>
</feature>
<sequence length="213" mass="23513">MKTSIAIVDYGMGNLRSVAQALMKAEPAADVKIVDRPEAIRAADRVVLPGQGAMPDCMRCLGESGLQEAVVEASRTKPLLGVCVGEQMLFDWSAEGDTKGLGLLPGKVVRFALEGRLQDDGSRFKVPQMGWNRVRQTQAHPLWDGVPDDAYFYFVHSYYVVPDNPAHTAGETLYGDVFTSAVARDNLFATQFHPEKSAEVGLRLYRNFVHWNP</sequence>
<evidence type="ECO:0000255" key="1">
    <source>
        <dbReference type="HAMAP-Rule" id="MF_00278"/>
    </source>
</evidence>
<reference key="1">
    <citation type="journal article" date="2004" name="Proc. Natl. Acad. Sci. U.S.A.">
        <title>Genomic plasticity of the causative agent of melioidosis, Burkholderia pseudomallei.</title>
        <authorList>
            <person name="Holden M.T.G."/>
            <person name="Titball R.W."/>
            <person name="Peacock S.J."/>
            <person name="Cerdeno-Tarraga A.-M."/>
            <person name="Atkins T."/>
            <person name="Crossman L.C."/>
            <person name="Pitt T."/>
            <person name="Churcher C."/>
            <person name="Mungall K.L."/>
            <person name="Bentley S.D."/>
            <person name="Sebaihia M."/>
            <person name="Thomson N.R."/>
            <person name="Bason N."/>
            <person name="Beacham I.R."/>
            <person name="Brooks K."/>
            <person name="Brown K.A."/>
            <person name="Brown N.F."/>
            <person name="Challis G.L."/>
            <person name="Cherevach I."/>
            <person name="Chillingworth T."/>
            <person name="Cronin A."/>
            <person name="Crossett B."/>
            <person name="Davis P."/>
            <person name="DeShazer D."/>
            <person name="Feltwell T."/>
            <person name="Fraser A."/>
            <person name="Hance Z."/>
            <person name="Hauser H."/>
            <person name="Holroyd S."/>
            <person name="Jagels K."/>
            <person name="Keith K.E."/>
            <person name="Maddison M."/>
            <person name="Moule S."/>
            <person name="Price C."/>
            <person name="Quail M.A."/>
            <person name="Rabbinowitsch E."/>
            <person name="Rutherford K."/>
            <person name="Sanders M."/>
            <person name="Simmonds M."/>
            <person name="Songsivilai S."/>
            <person name="Stevens K."/>
            <person name="Tumapa S."/>
            <person name="Vesaratchavest M."/>
            <person name="Whitehead S."/>
            <person name="Yeats C."/>
            <person name="Barrell B.G."/>
            <person name="Oyston P.C.F."/>
            <person name="Parkhill J."/>
        </authorList>
    </citation>
    <scope>NUCLEOTIDE SEQUENCE [LARGE SCALE GENOMIC DNA]</scope>
    <source>
        <strain>K96243</strain>
    </source>
</reference>
<organism>
    <name type="scientific">Burkholderia pseudomallei (strain K96243)</name>
    <dbReference type="NCBI Taxonomy" id="272560"/>
    <lineage>
        <taxon>Bacteria</taxon>
        <taxon>Pseudomonadati</taxon>
        <taxon>Pseudomonadota</taxon>
        <taxon>Betaproteobacteria</taxon>
        <taxon>Burkholderiales</taxon>
        <taxon>Burkholderiaceae</taxon>
        <taxon>Burkholderia</taxon>
        <taxon>pseudomallei group</taxon>
    </lineage>
</organism>
<comment type="function">
    <text evidence="1">IGPS catalyzes the conversion of PRFAR and glutamine to IGP, AICAR and glutamate. The HisH subunit catalyzes the hydrolysis of glutamine to glutamate and ammonia as part of the synthesis of IGP and AICAR. The resulting ammonia molecule is channeled to the active site of HisF.</text>
</comment>
<comment type="catalytic activity">
    <reaction evidence="1">
        <text>5-[(5-phospho-1-deoxy-D-ribulos-1-ylimino)methylamino]-1-(5-phospho-beta-D-ribosyl)imidazole-4-carboxamide + L-glutamine = D-erythro-1-(imidazol-4-yl)glycerol 3-phosphate + 5-amino-1-(5-phospho-beta-D-ribosyl)imidazole-4-carboxamide + L-glutamate + H(+)</text>
        <dbReference type="Rhea" id="RHEA:24793"/>
        <dbReference type="ChEBI" id="CHEBI:15378"/>
        <dbReference type="ChEBI" id="CHEBI:29985"/>
        <dbReference type="ChEBI" id="CHEBI:58278"/>
        <dbReference type="ChEBI" id="CHEBI:58359"/>
        <dbReference type="ChEBI" id="CHEBI:58475"/>
        <dbReference type="ChEBI" id="CHEBI:58525"/>
        <dbReference type="EC" id="4.3.2.10"/>
    </reaction>
</comment>
<comment type="catalytic activity">
    <reaction evidence="1">
        <text>L-glutamine + H2O = L-glutamate + NH4(+)</text>
        <dbReference type="Rhea" id="RHEA:15889"/>
        <dbReference type="ChEBI" id="CHEBI:15377"/>
        <dbReference type="ChEBI" id="CHEBI:28938"/>
        <dbReference type="ChEBI" id="CHEBI:29985"/>
        <dbReference type="ChEBI" id="CHEBI:58359"/>
        <dbReference type="EC" id="3.5.1.2"/>
    </reaction>
</comment>
<comment type="pathway">
    <text evidence="1">Amino-acid biosynthesis; L-histidine biosynthesis; L-histidine from 5-phospho-alpha-D-ribose 1-diphosphate: step 5/9.</text>
</comment>
<comment type="subunit">
    <text evidence="1">Heterodimer of HisH and HisF.</text>
</comment>
<comment type="subcellular location">
    <subcellularLocation>
        <location evidence="1">Cytoplasm</location>
    </subcellularLocation>
</comment>
<protein>
    <recommendedName>
        <fullName evidence="1">Imidazole glycerol phosphate synthase subunit HisH</fullName>
        <ecNumber evidence="1">4.3.2.10</ecNumber>
    </recommendedName>
    <alternativeName>
        <fullName evidence="1">IGP synthase glutaminase subunit</fullName>
        <ecNumber evidence="1">3.5.1.2</ecNumber>
    </alternativeName>
    <alternativeName>
        <fullName evidence="1">IGP synthase subunit HisH</fullName>
    </alternativeName>
    <alternativeName>
        <fullName evidence="1">ImGP synthase subunit HisH</fullName>
        <shortName evidence="1">IGPS subunit HisH</shortName>
    </alternativeName>
</protein>
<accession>Q63Q90</accession>
<dbReference type="EC" id="4.3.2.10" evidence="1"/>
<dbReference type="EC" id="3.5.1.2" evidence="1"/>
<dbReference type="EMBL" id="BX571965">
    <property type="protein sequence ID" value="CAH37145.1"/>
    <property type="molecule type" value="Genomic_DNA"/>
</dbReference>
<dbReference type="RefSeq" id="WP_004199907.1">
    <property type="nucleotide sequence ID" value="NZ_CP009538.1"/>
</dbReference>
<dbReference type="RefSeq" id="YP_109728.1">
    <property type="nucleotide sequence ID" value="NC_006350.1"/>
</dbReference>
<dbReference type="SMR" id="Q63Q90"/>
<dbReference type="STRING" id="272560.BPSL3135"/>
<dbReference type="GeneID" id="92980392"/>
<dbReference type="KEGG" id="bps:BPSL3135"/>
<dbReference type="PATRIC" id="fig|272560.51.peg.2108"/>
<dbReference type="eggNOG" id="COG0118">
    <property type="taxonomic scope" value="Bacteria"/>
</dbReference>
<dbReference type="UniPathway" id="UPA00031">
    <property type="reaction ID" value="UER00010"/>
</dbReference>
<dbReference type="Proteomes" id="UP000000605">
    <property type="component" value="Chromosome 1"/>
</dbReference>
<dbReference type="GO" id="GO:0005737">
    <property type="term" value="C:cytoplasm"/>
    <property type="evidence" value="ECO:0007669"/>
    <property type="project" value="UniProtKB-SubCell"/>
</dbReference>
<dbReference type="GO" id="GO:0004359">
    <property type="term" value="F:glutaminase activity"/>
    <property type="evidence" value="ECO:0007669"/>
    <property type="project" value="UniProtKB-EC"/>
</dbReference>
<dbReference type="GO" id="GO:0000107">
    <property type="term" value="F:imidazoleglycerol-phosphate synthase activity"/>
    <property type="evidence" value="ECO:0007669"/>
    <property type="project" value="UniProtKB-UniRule"/>
</dbReference>
<dbReference type="GO" id="GO:0016829">
    <property type="term" value="F:lyase activity"/>
    <property type="evidence" value="ECO:0007669"/>
    <property type="project" value="UniProtKB-KW"/>
</dbReference>
<dbReference type="GO" id="GO:0000105">
    <property type="term" value="P:L-histidine biosynthetic process"/>
    <property type="evidence" value="ECO:0007669"/>
    <property type="project" value="UniProtKB-UniRule"/>
</dbReference>
<dbReference type="CDD" id="cd01748">
    <property type="entry name" value="GATase1_IGP_Synthase"/>
    <property type="match status" value="1"/>
</dbReference>
<dbReference type="Gene3D" id="3.40.50.880">
    <property type="match status" value="1"/>
</dbReference>
<dbReference type="HAMAP" id="MF_00278">
    <property type="entry name" value="HisH"/>
    <property type="match status" value="1"/>
</dbReference>
<dbReference type="InterPro" id="IPR029062">
    <property type="entry name" value="Class_I_gatase-like"/>
</dbReference>
<dbReference type="InterPro" id="IPR017926">
    <property type="entry name" value="GATASE"/>
</dbReference>
<dbReference type="InterPro" id="IPR010139">
    <property type="entry name" value="Imidazole-glycPsynth_HisH"/>
</dbReference>
<dbReference type="NCBIfam" id="TIGR01855">
    <property type="entry name" value="IMP_synth_hisH"/>
    <property type="match status" value="1"/>
</dbReference>
<dbReference type="PANTHER" id="PTHR42701">
    <property type="entry name" value="IMIDAZOLE GLYCEROL PHOSPHATE SYNTHASE SUBUNIT HISH"/>
    <property type="match status" value="1"/>
</dbReference>
<dbReference type="PANTHER" id="PTHR42701:SF2">
    <property type="entry name" value="IMIDAZOLE GLYCEROL PHOSPHATE SYNTHASE SUBUNIT HISH 1"/>
    <property type="match status" value="1"/>
</dbReference>
<dbReference type="Pfam" id="PF00117">
    <property type="entry name" value="GATase"/>
    <property type="match status" value="1"/>
</dbReference>
<dbReference type="PIRSF" id="PIRSF000495">
    <property type="entry name" value="Amidotransf_hisH"/>
    <property type="match status" value="1"/>
</dbReference>
<dbReference type="SUPFAM" id="SSF52317">
    <property type="entry name" value="Class I glutamine amidotransferase-like"/>
    <property type="match status" value="1"/>
</dbReference>
<dbReference type="PROSITE" id="PS51273">
    <property type="entry name" value="GATASE_TYPE_1"/>
    <property type="match status" value="1"/>
</dbReference>
<gene>
    <name evidence="1" type="primary">hisH</name>
    <name type="ordered locus">BPSL3135</name>
</gene>
<keyword id="KW-0028">Amino-acid biosynthesis</keyword>
<keyword id="KW-0963">Cytoplasm</keyword>
<keyword id="KW-0315">Glutamine amidotransferase</keyword>
<keyword id="KW-0368">Histidine biosynthesis</keyword>
<keyword id="KW-0378">Hydrolase</keyword>
<keyword id="KW-0456">Lyase</keyword>
<keyword id="KW-1185">Reference proteome</keyword>
<name>HIS5_BURPS</name>
<proteinExistence type="inferred from homology"/>